<sequence>MAELTALESLIEMGFPRGRAEKALALTGNQGIEAAMDWLMEHEDDPDVDEPLETPLSHVLGREPTPSEQVGPEGSGSAAGESRPILTEEERQEQTKRMLELVAQKQREREEREEREALEREKQRRRQGQELSVARQKLQEDEMRRAAEERRREKAEELAARQRVREKIERDKAERAKKYGGSVGSRSSPPATDPGPVPSSPSQEPPTKREYDQCRIQVRLPDGTSLTQTFRAREQLAAVRLYVELHRGEEPGQDQDPVQLLSGFPRRAFSEADMERPLQELGLVPSAVLIVAKKCPS</sequence>
<reference key="1">
    <citation type="journal article" date="2005" name="Science">
        <title>The transcriptional landscape of the mammalian genome.</title>
        <authorList>
            <person name="Carninci P."/>
            <person name="Kasukawa T."/>
            <person name="Katayama S."/>
            <person name="Gough J."/>
            <person name="Frith M.C."/>
            <person name="Maeda N."/>
            <person name="Oyama R."/>
            <person name="Ravasi T."/>
            <person name="Lenhard B."/>
            <person name="Wells C."/>
            <person name="Kodzius R."/>
            <person name="Shimokawa K."/>
            <person name="Bajic V.B."/>
            <person name="Brenner S.E."/>
            <person name="Batalov S."/>
            <person name="Forrest A.R."/>
            <person name="Zavolan M."/>
            <person name="Davis M.J."/>
            <person name="Wilming L.G."/>
            <person name="Aidinis V."/>
            <person name="Allen J.E."/>
            <person name="Ambesi-Impiombato A."/>
            <person name="Apweiler R."/>
            <person name="Aturaliya R.N."/>
            <person name="Bailey T.L."/>
            <person name="Bansal M."/>
            <person name="Baxter L."/>
            <person name="Beisel K.W."/>
            <person name="Bersano T."/>
            <person name="Bono H."/>
            <person name="Chalk A.M."/>
            <person name="Chiu K.P."/>
            <person name="Choudhary V."/>
            <person name="Christoffels A."/>
            <person name="Clutterbuck D.R."/>
            <person name="Crowe M.L."/>
            <person name="Dalla E."/>
            <person name="Dalrymple B.P."/>
            <person name="de Bono B."/>
            <person name="Della Gatta G."/>
            <person name="di Bernardo D."/>
            <person name="Down T."/>
            <person name="Engstrom P."/>
            <person name="Fagiolini M."/>
            <person name="Faulkner G."/>
            <person name="Fletcher C.F."/>
            <person name="Fukushima T."/>
            <person name="Furuno M."/>
            <person name="Futaki S."/>
            <person name="Gariboldi M."/>
            <person name="Georgii-Hemming P."/>
            <person name="Gingeras T.R."/>
            <person name="Gojobori T."/>
            <person name="Green R.E."/>
            <person name="Gustincich S."/>
            <person name="Harbers M."/>
            <person name="Hayashi Y."/>
            <person name="Hensch T.K."/>
            <person name="Hirokawa N."/>
            <person name="Hill D."/>
            <person name="Huminiecki L."/>
            <person name="Iacono M."/>
            <person name="Ikeo K."/>
            <person name="Iwama A."/>
            <person name="Ishikawa T."/>
            <person name="Jakt M."/>
            <person name="Kanapin A."/>
            <person name="Katoh M."/>
            <person name="Kawasawa Y."/>
            <person name="Kelso J."/>
            <person name="Kitamura H."/>
            <person name="Kitano H."/>
            <person name="Kollias G."/>
            <person name="Krishnan S.P."/>
            <person name="Kruger A."/>
            <person name="Kummerfeld S.K."/>
            <person name="Kurochkin I.V."/>
            <person name="Lareau L.F."/>
            <person name="Lazarevic D."/>
            <person name="Lipovich L."/>
            <person name="Liu J."/>
            <person name="Liuni S."/>
            <person name="McWilliam S."/>
            <person name="Madan Babu M."/>
            <person name="Madera M."/>
            <person name="Marchionni L."/>
            <person name="Matsuda H."/>
            <person name="Matsuzawa S."/>
            <person name="Miki H."/>
            <person name="Mignone F."/>
            <person name="Miyake S."/>
            <person name="Morris K."/>
            <person name="Mottagui-Tabar S."/>
            <person name="Mulder N."/>
            <person name="Nakano N."/>
            <person name="Nakauchi H."/>
            <person name="Ng P."/>
            <person name="Nilsson R."/>
            <person name="Nishiguchi S."/>
            <person name="Nishikawa S."/>
            <person name="Nori F."/>
            <person name="Ohara O."/>
            <person name="Okazaki Y."/>
            <person name="Orlando V."/>
            <person name="Pang K.C."/>
            <person name="Pavan W.J."/>
            <person name="Pavesi G."/>
            <person name="Pesole G."/>
            <person name="Petrovsky N."/>
            <person name="Piazza S."/>
            <person name="Reed J."/>
            <person name="Reid J.F."/>
            <person name="Ring B.Z."/>
            <person name="Ringwald M."/>
            <person name="Rost B."/>
            <person name="Ruan Y."/>
            <person name="Salzberg S.L."/>
            <person name="Sandelin A."/>
            <person name="Schneider C."/>
            <person name="Schoenbach C."/>
            <person name="Sekiguchi K."/>
            <person name="Semple C.A."/>
            <person name="Seno S."/>
            <person name="Sessa L."/>
            <person name="Sheng Y."/>
            <person name="Shibata Y."/>
            <person name="Shimada H."/>
            <person name="Shimada K."/>
            <person name="Silva D."/>
            <person name="Sinclair B."/>
            <person name="Sperling S."/>
            <person name="Stupka E."/>
            <person name="Sugiura K."/>
            <person name="Sultana R."/>
            <person name="Takenaka Y."/>
            <person name="Taki K."/>
            <person name="Tammoja K."/>
            <person name="Tan S.L."/>
            <person name="Tang S."/>
            <person name="Taylor M.S."/>
            <person name="Tegner J."/>
            <person name="Teichmann S.A."/>
            <person name="Ueda H.R."/>
            <person name="van Nimwegen E."/>
            <person name="Verardo R."/>
            <person name="Wei C.L."/>
            <person name="Yagi K."/>
            <person name="Yamanishi H."/>
            <person name="Zabarovsky E."/>
            <person name="Zhu S."/>
            <person name="Zimmer A."/>
            <person name="Hide W."/>
            <person name="Bult C."/>
            <person name="Grimmond S.M."/>
            <person name="Teasdale R.D."/>
            <person name="Liu E.T."/>
            <person name="Brusic V."/>
            <person name="Quackenbush J."/>
            <person name="Wahlestedt C."/>
            <person name="Mattick J.S."/>
            <person name="Hume D.A."/>
            <person name="Kai C."/>
            <person name="Sasaki D."/>
            <person name="Tomaru Y."/>
            <person name="Fukuda S."/>
            <person name="Kanamori-Katayama M."/>
            <person name="Suzuki M."/>
            <person name="Aoki J."/>
            <person name="Arakawa T."/>
            <person name="Iida J."/>
            <person name="Imamura K."/>
            <person name="Itoh M."/>
            <person name="Kato T."/>
            <person name="Kawaji H."/>
            <person name="Kawagashira N."/>
            <person name="Kawashima T."/>
            <person name="Kojima M."/>
            <person name="Kondo S."/>
            <person name="Konno H."/>
            <person name="Nakano K."/>
            <person name="Ninomiya N."/>
            <person name="Nishio T."/>
            <person name="Okada M."/>
            <person name="Plessy C."/>
            <person name="Shibata K."/>
            <person name="Shiraki T."/>
            <person name="Suzuki S."/>
            <person name="Tagami M."/>
            <person name="Waki K."/>
            <person name="Watahiki A."/>
            <person name="Okamura-Oho Y."/>
            <person name="Suzuki H."/>
            <person name="Kawai J."/>
            <person name="Hayashizaki Y."/>
        </authorList>
    </citation>
    <scope>NUCLEOTIDE SEQUENCE [LARGE SCALE MRNA]</scope>
    <source>
        <strain>C57BL/6J</strain>
        <tissue>Bone marrow</tissue>
    </source>
</reference>
<reference key="2">
    <citation type="journal article" date="2004" name="Genome Res.">
        <title>The status, quality, and expansion of the NIH full-length cDNA project: the Mammalian Gene Collection (MGC).</title>
        <authorList>
            <consortium name="The MGC Project Team"/>
        </authorList>
    </citation>
    <scope>NUCLEOTIDE SEQUENCE [LARGE SCALE MRNA]</scope>
</reference>
<reference key="3">
    <citation type="journal article" date="2001" name="Proc. Natl. Acad. Sci. U.S.A.">
        <title>Identification of proteins that interact with mammalian peptide:N-glycanase and implicate this hydrolase in the proteasome-dependent pathway for protein degradation.</title>
        <authorList>
            <person name="Park H."/>
            <person name="Suzuki T."/>
            <person name="Lennarz W.J."/>
        </authorList>
    </citation>
    <scope>INTERACTION WITH NGLY1</scope>
</reference>
<reference key="4">
    <citation type="journal article" date="2004" name="Mol. Cell. Proteomics">
        <title>Phosphoproteomic analysis of the developing mouse brain.</title>
        <authorList>
            <person name="Ballif B.A."/>
            <person name="Villen J."/>
            <person name="Beausoleil S.A."/>
            <person name="Schwartz D."/>
            <person name="Gygi S.P."/>
        </authorList>
    </citation>
    <scope>IDENTIFICATION BY MASS SPECTROMETRY [LARGE SCALE ANALYSIS]</scope>
    <source>
        <tissue>Embryonic brain</tissue>
    </source>
</reference>
<reference key="5">
    <citation type="journal article" date="2005" name="J. Biochem.">
        <title>A novel protein specifically interacting with Homer2 regulates ubiquitin-proteasome systems.</title>
        <authorList>
            <person name="Ishibashi T."/>
            <person name="Ogawa S."/>
            <person name="Hashiguchi Y."/>
            <person name="Inoue Y."/>
            <person name="Udo H."/>
            <person name="Ohzono H."/>
            <person name="Kato A."/>
            <person name="Minakami R."/>
            <person name="Sugiyama H."/>
        </authorList>
    </citation>
    <scope>SUBCELLULAR LOCATION</scope>
    <scope>INTERACTION WITH HOMER2</scope>
</reference>
<reference key="6">
    <citation type="journal article" date="2006" name="Proc. Natl. Acad. Sci. U.S.A.">
        <title>The AAA ATPase p97 links peptide N-glycanase to the endoplasmic reticulum-associated E3 ligase autocrine motility factor receptor.</title>
        <authorList>
            <person name="Li G."/>
            <person name="Zhao G."/>
            <person name="Zhou X."/>
            <person name="Schindelin H."/>
            <person name="Lennarz W.J."/>
        </authorList>
    </citation>
    <scope>FUNCTION</scope>
    <scope>INTERACTION WITH AMFR; NGLY1; RAD23B AND VCP</scope>
</reference>
<reference key="7">
    <citation type="journal article" date="2007" name="Proc. Natl. Acad. Sci. U.S.A.">
        <title>Large-scale phosphorylation analysis of mouse liver.</title>
        <authorList>
            <person name="Villen J."/>
            <person name="Beausoleil S.A."/>
            <person name="Gerber S.A."/>
            <person name="Gygi S.P."/>
        </authorList>
    </citation>
    <scope>IDENTIFICATION BY MASS SPECTROMETRY [LARGE SCALE ANALYSIS]</scope>
    <source>
        <tissue>Liver</tissue>
    </source>
</reference>
<reference key="8">
    <citation type="journal article" date="2009" name="Mol. Cell. Proteomics">
        <title>Large scale localization of protein phosphorylation by use of electron capture dissociation mass spectrometry.</title>
        <authorList>
            <person name="Sweet S.M."/>
            <person name="Bailey C.M."/>
            <person name="Cunningham D.L."/>
            <person name="Heath J.K."/>
            <person name="Cooper H.J."/>
        </authorList>
    </citation>
    <scope>IDENTIFICATION BY MASS SPECTROMETRY [LARGE SCALE ANALYSIS]</scope>
    <source>
        <tissue>Embryonic fibroblast</tissue>
    </source>
</reference>
<reference key="9">
    <citation type="journal article" date="2010" name="Cell">
        <title>A tissue-specific atlas of mouse protein phosphorylation and expression.</title>
        <authorList>
            <person name="Huttlin E.L."/>
            <person name="Jedrychowski M.P."/>
            <person name="Elias J.E."/>
            <person name="Goswami T."/>
            <person name="Rad R."/>
            <person name="Beausoleil S.A."/>
            <person name="Villen J."/>
            <person name="Haas W."/>
            <person name="Sowa M.E."/>
            <person name="Gygi S.P."/>
        </authorList>
    </citation>
    <scope>PHOSPHORYLATION [LARGE SCALE ANALYSIS] AT SER-199</scope>
    <scope>IDENTIFICATION BY MASS SPECTROMETRY [LARGE SCALE ANALYSIS]</scope>
    <source>
        <tissue>Brain</tissue>
        <tissue>Brown adipose tissue</tissue>
        <tissue>Heart</tissue>
        <tissue>Kidney</tissue>
        <tissue>Liver</tissue>
        <tissue>Lung</tissue>
        <tissue>Pancreas</tissue>
        <tissue>Spleen</tissue>
        <tissue>Testis</tissue>
    </source>
</reference>
<reference key="10">
    <citation type="submission" date="2004-11" db="PDB data bank">
        <title>Solution structure of RSGI RUH-027, a UBA domain from mouse cDNA.</title>
        <authorList>
            <consortium name="RIKEN structural genomics initiative (RSGI)"/>
        </authorList>
    </citation>
    <scope>STRUCTURE BY NMR OF 2-52</scope>
</reference>
<dbReference type="EMBL" id="AK150442">
    <property type="protein sequence ID" value="BAE29564.1"/>
    <property type="molecule type" value="mRNA"/>
</dbReference>
<dbReference type="EMBL" id="BC006701">
    <property type="protein sequence ID" value="AAH06701.1"/>
    <property type="molecule type" value="mRNA"/>
</dbReference>
<dbReference type="CCDS" id="CCDS29553.1"/>
<dbReference type="RefSeq" id="NP_001348973.1">
    <property type="nucleotide sequence ID" value="NM_001362044.1"/>
</dbReference>
<dbReference type="RefSeq" id="NP_666205.1">
    <property type="nucleotide sequence ID" value="NM_146093.2"/>
</dbReference>
<dbReference type="RefSeq" id="XP_006526985.1">
    <property type="nucleotide sequence ID" value="XM_006526922.1"/>
</dbReference>
<dbReference type="PDB" id="1WHC">
    <property type="method" value="NMR"/>
    <property type="chains" value="A=2-52"/>
</dbReference>
<dbReference type="PDBsum" id="1WHC"/>
<dbReference type="SMR" id="Q922Y1"/>
<dbReference type="BioGRID" id="230443">
    <property type="interactions" value="29"/>
</dbReference>
<dbReference type="CORUM" id="Q922Y1"/>
<dbReference type="FunCoup" id="Q922Y1">
    <property type="interactions" value="3534"/>
</dbReference>
<dbReference type="IntAct" id="Q922Y1">
    <property type="interactions" value="5"/>
</dbReference>
<dbReference type="MINT" id="Q922Y1"/>
<dbReference type="STRING" id="10090.ENSMUSP00000157971"/>
<dbReference type="MEROPS" id="C19.089"/>
<dbReference type="GlyGen" id="Q922Y1">
    <property type="glycosylation" value="2 sites, 1 O-linked glycan (1 site)"/>
</dbReference>
<dbReference type="iPTMnet" id="Q922Y1"/>
<dbReference type="PhosphoSitePlus" id="Q922Y1"/>
<dbReference type="SwissPalm" id="Q922Y1"/>
<dbReference type="REPRODUCTION-2DPAGE" id="IPI00123589"/>
<dbReference type="REPRODUCTION-2DPAGE" id="Q922Y1"/>
<dbReference type="jPOST" id="Q922Y1"/>
<dbReference type="PaxDb" id="10090-ENSMUSP00000093974"/>
<dbReference type="PeptideAtlas" id="Q922Y1"/>
<dbReference type="ProteomicsDB" id="298114"/>
<dbReference type="Pumba" id="Q922Y1"/>
<dbReference type="Antibodypedia" id="1591">
    <property type="antibodies" value="123 antibodies from 23 providers"/>
</dbReference>
<dbReference type="DNASU" id="225896"/>
<dbReference type="Ensembl" id="ENSMUST00000166407.9">
    <property type="protein sequence ID" value="ENSMUSP00000133250.2"/>
    <property type="gene ID" value="ENSMUSG00000071655.13"/>
</dbReference>
<dbReference type="Ensembl" id="ENSMUST00000238036.2">
    <property type="protein sequence ID" value="ENSMUSP00000157971.2"/>
    <property type="gene ID" value="ENSMUSG00000071655.13"/>
</dbReference>
<dbReference type="GeneID" id="225896"/>
<dbReference type="KEGG" id="mmu:225896"/>
<dbReference type="UCSC" id="uc008gnp.1">
    <property type="organism name" value="mouse"/>
</dbReference>
<dbReference type="AGR" id="MGI:1289301"/>
<dbReference type="CTD" id="51035"/>
<dbReference type="MGI" id="MGI:1289301">
    <property type="gene designation" value="Ubxn1"/>
</dbReference>
<dbReference type="VEuPathDB" id="HostDB:ENSMUSG00000071655"/>
<dbReference type="eggNOG" id="KOG2689">
    <property type="taxonomic scope" value="Eukaryota"/>
</dbReference>
<dbReference type="GeneTree" id="ENSGT00940000156457"/>
<dbReference type="HOGENOM" id="CLU_047594_1_0_1"/>
<dbReference type="InParanoid" id="Q922Y1"/>
<dbReference type="OMA" id="AQHFPRK"/>
<dbReference type="OrthoDB" id="10254930at2759"/>
<dbReference type="PhylomeDB" id="Q922Y1"/>
<dbReference type="TreeFam" id="TF313944"/>
<dbReference type="Reactome" id="R-MMU-532668">
    <property type="pathway name" value="N-glycan trimming in the ER and Calnexin/Calreticulin cycle"/>
</dbReference>
<dbReference type="Reactome" id="R-MMU-5693565">
    <property type="pathway name" value="Recruitment and ATM-mediated phosphorylation of repair and signaling proteins at DNA double strand breaks"/>
</dbReference>
<dbReference type="BioGRID-ORCS" id="225896">
    <property type="hits" value="2 hits in 78 CRISPR screens"/>
</dbReference>
<dbReference type="ChiTaRS" id="Ubxn1">
    <property type="organism name" value="mouse"/>
</dbReference>
<dbReference type="EvolutionaryTrace" id="Q922Y1"/>
<dbReference type="PRO" id="PR:Q922Y1"/>
<dbReference type="Proteomes" id="UP000000589">
    <property type="component" value="Chromosome 19"/>
</dbReference>
<dbReference type="RNAct" id="Q922Y1">
    <property type="molecule type" value="protein"/>
</dbReference>
<dbReference type="Bgee" id="ENSMUSG00000071655">
    <property type="expression patterns" value="Expressed in urinary bladder urothelium and 263 other cell types or tissues"/>
</dbReference>
<dbReference type="ExpressionAtlas" id="Q922Y1">
    <property type="expression patterns" value="baseline and differential"/>
</dbReference>
<dbReference type="GO" id="GO:0005829">
    <property type="term" value="C:cytosol"/>
    <property type="evidence" value="ECO:0007669"/>
    <property type="project" value="Ensembl"/>
</dbReference>
<dbReference type="GO" id="GO:0005654">
    <property type="term" value="C:nucleoplasm"/>
    <property type="evidence" value="ECO:0007669"/>
    <property type="project" value="Ensembl"/>
</dbReference>
<dbReference type="GO" id="GO:0034098">
    <property type="term" value="C:VCP-NPL4-UFD1 AAA ATPase complex"/>
    <property type="evidence" value="ECO:0007669"/>
    <property type="project" value="Ensembl"/>
</dbReference>
<dbReference type="GO" id="GO:0051117">
    <property type="term" value="F:ATPase binding"/>
    <property type="evidence" value="ECO:0007669"/>
    <property type="project" value="Ensembl"/>
</dbReference>
<dbReference type="GO" id="GO:0036435">
    <property type="term" value="F:K48-linked polyubiquitin modification-dependent protein binding"/>
    <property type="evidence" value="ECO:0007669"/>
    <property type="project" value="Ensembl"/>
</dbReference>
<dbReference type="GO" id="GO:0071796">
    <property type="term" value="F:K6-linked polyubiquitin modification-dependent protein binding"/>
    <property type="evidence" value="ECO:0000250"/>
    <property type="project" value="UniProtKB"/>
</dbReference>
<dbReference type="GO" id="GO:1904855">
    <property type="term" value="F:proteasome regulatory particle binding"/>
    <property type="evidence" value="ECO:0007669"/>
    <property type="project" value="Ensembl"/>
</dbReference>
<dbReference type="GO" id="GO:0043130">
    <property type="term" value="F:ubiquitin binding"/>
    <property type="evidence" value="ECO:0007669"/>
    <property type="project" value="Ensembl"/>
</dbReference>
<dbReference type="GO" id="GO:0031625">
    <property type="term" value="F:ubiquitin protein ligase binding"/>
    <property type="evidence" value="ECO:0007669"/>
    <property type="project" value="Ensembl"/>
</dbReference>
<dbReference type="GO" id="GO:1904293">
    <property type="term" value="P:negative regulation of ERAD pathway"/>
    <property type="evidence" value="ECO:0007669"/>
    <property type="project" value="Ensembl"/>
</dbReference>
<dbReference type="GO" id="GO:0032435">
    <property type="term" value="P:negative regulation of proteasomal ubiquitin-dependent protein catabolic process"/>
    <property type="evidence" value="ECO:0000250"/>
    <property type="project" value="UniProtKB"/>
</dbReference>
<dbReference type="GO" id="GO:1903094">
    <property type="term" value="P:negative regulation of protein K48-linked deubiquitination"/>
    <property type="evidence" value="ECO:0007669"/>
    <property type="project" value="Ensembl"/>
</dbReference>
<dbReference type="GO" id="GO:0031397">
    <property type="term" value="P:negative regulation of protein ubiquitination"/>
    <property type="evidence" value="ECO:0000250"/>
    <property type="project" value="UniProtKB"/>
</dbReference>
<dbReference type="CDD" id="cd14302">
    <property type="entry name" value="UBA_UBXN1"/>
    <property type="match status" value="1"/>
</dbReference>
<dbReference type="CDD" id="cd01772">
    <property type="entry name" value="UBX_UBXN1"/>
    <property type="match status" value="1"/>
</dbReference>
<dbReference type="FunFam" id="1.10.8.10:FF:000044">
    <property type="entry name" value="UBX domain-containing protein 1"/>
    <property type="match status" value="1"/>
</dbReference>
<dbReference type="FunFam" id="3.10.20.90:FF:000134">
    <property type="entry name" value="UBX domain-containing protein 1"/>
    <property type="match status" value="1"/>
</dbReference>
<dbReference type="Gene3D" id="1.10.8.10">
    <property type="entry name" value="DNA helicase RuvA subunit, C-terminal domain"/>
    <property type="match status" value="1"/>
</dbReference>
<dbReference type="Gene3D" id="3.10.20.90">
    <property type="entry name" value="Phosphatidylinositol 3-kinase Catalytic Subunit, Chain A, domain 1"/>
    <property type="match status" value="1"/>
</dbReference>
<dbReference type="InterPro" id="IPR015940">
    <property type="entry name" value="UBA"/>
</dbReference>
<dbReference type="InterPro" id="IPR009060">
    <property type="entry name" value="UBA-like_sf"/>
</dbReference>
<dbReference type="InterPro" id="IPR041923">
    <property type="entry name" value="UBA_UBXN1"/>
</dbReference>
<dbReference type="InterPro" id="IPR029071">
    <property type="entry name" value="Ubiquitin-like_domsf"/>
</dbReference>
<dbReference type="InterPro" id="IPR001012">
    <property type="entry name" value="UBX_dom"/>
</dbReference>
<dbReference type="PANTHER" id="PTHR46340">
    <property type="entry name" value="UBX DOMAIN-CONTAINING PROTEIN 1"/>
    <property type="match status" value="1"/>
</dbReference>
<dbReference type="PANTHER" id="PTHR46340:SF1">
    <property type="entry name" value="UBX DOMAIN-CONTAINING PROTEIN 1"/>
    <property type="match status" value="1"/>
</dbReference>
<dbReference type="Pfam" id="PF22562">
    <property type="entry name" value="UBA_7"/>
    <property type="match status" value="1"/>
</dbReference>
<dbReference type="Pfam" id="PF00789">
    <property type="entry name" value="UBX"/>
    <property type="match status" value="1"/>
</dbReference>
<dbReference type="SMART" id="SM00165">
    <property type="entry name" value="UBA"/>
    <property type="match status" value="1"/>
</dbReference>
<dbReference type="SMART" id="SM00166">
    <property type="entry name" value="UBX"/>
    <property type="match status" value="1"/>
</dbReference>
<dbReference type="SUPFAM" id="SSF46934">
    <property type="entry name" value="UBA-like"/>
    <property type="match status" value="1"/>
</dbReference>
<dbReference type="SUPFAM" id="SSF54236">
    <property type="entry name" value="Ubiquitin-like"/>
    <property type="match status" value="1"/>
</dbReference>
<dbReference type="PROSITE" id="PS50030">
    <property type="entry name" value="UBA"/>
    <property type="match status" value="1"/>
</dbReference>
<dbReference type="PROSITE" id="PS50033">
    <property type="entry name" value="UBX"/>
    <property type="match status" value="1"/>
</dbReference>
<accession>Q922Y1</accession>
<accession>Q3UCP8</accession>
<organism>
    <name type="scientific">Mus musculus</name>
    <name type="common">Mouse</name>
    <dbReference type="NCBI Taxonomy" id="10090"/>
    <lineage>
        <taxon>Eukaryota</taxon>
        <taxon>Metazoa</taxon>
        <taxon>Chordata</taxon>
        <taxon>Craniata</taxon>
        <taxon>Vertebrata</taxon>
        <taxon>Euteleostomi</taxon>
        <taxon>Mammalia</taxon>
        <taxon>Eutheria</taxon>
        <taxon>Euarchontoglires</taxon>
        <taxon>Glires</taxon>
        <taxon>Rodentia</taxon>
        <taxon>Myomorpha</taxon>
        <taxon>Muroidea</taxon>
        <taxon>Muridae</taxon>
        <taxon>Murinae</taxon>
        <taxon>Mus</taxon>
        <taxon>Mus</taxon>
    </lineage>
</organism>
<keyword id="KW-0002">3D-structure</keyword>
<keyword id="KW-0007">Acetylation</keyword>
<keyword id="KW-0175">Coiled coil</keyword>
<keyword id="KW-0963">Cytoplasm</keyword>
<keyword id="KW-0597">Phosphoprotein</keyword>
<keyword id="KW-1185">Reference proteome</keyword>
<proteinExistence type="evidence at protein level"/>
<comment type="function">
    <text evidence="2 8">Ubiquitin-binding protein that plays a role in the modulation of innate immune response. Blocks both the RIG-I-like receptors (RLR) and NF-kappa-B pathways. Following viral infection, UBXN1 is induced and recruited to the RLR component MAVS. In turn, interferes with MAVS oligomerization, and disrupts the MAVS/TRAF3/TRAF6 signalosome. This function probably serves as a brake to prevent excessive RLR signaling. Interferes with the TNFalpha-triggered NF-kappa-B pathway by interacting with cellular inhibitors of apoptosis proteins (cIAPs) and thereby inhibiting their recruitment to TNFR1. Also prevents the activation of NF-kappa-B by associating with CUL1 and thus inhibiting NF-kappa-B inhibitor alpha/NFKBIA degradation that remains bound to NF-kappa-B. Interacts with the BRCA1-BARD1 heterodimer and regulates its activity. Specifically binds 'Lys-6'-linked polyubiquitin chains. Interaction with autoubiquitinated BRCA1 leads to the inhibition of the E3 ubiquitin-protein ligase activity of the BRCA1-BARD1 heterodimer. Component of a complex required to couple deglycosylation and proteasome-mediated degradation of misfolded proteins in the endoplasmic reticulum that are retrotranslocated in the cytosol.</text>
</comment>
<comment type="subunit">
    <text evidence="2 6 7 8">Interacts with MAVS; this interaction prevents MAVS oligomerization and thus disrupts the RLR signaling pathway. Interacts with CUL1; this interaction inhibits CUL1-mediated degradation of NF-kappa-B inhibitors. Interacts with BIRC2/c-IAP1; this interaction prevents TNFalpha-stimulated RIP1 ubiquitination and subsequent NF-kappa-B activation. Component of a complex required to couple retrotranslocation, ubiquitination and deglycosylation composed of NGLY1, SAKS1, AMFR, VCP and RAD23B (PubMed:11562482). Interacts with HOMER2 (PubMed:16709668). Interacts directly with VCP. Interacts with BRCA1 and BARD1; interaction takes place when BRCA1 is not autoubiquitinated but is strongly enhanced in the presence of autoubiquitinated BRCA1.</text>
</comment>
<comment type="subcellular location">
    <subcellularLocation>
        <location evidence="7">Cytoplasm</location>
    </subcellularLocation>
</comment>
<comment type="domain">
    <text evidence="1">The UBA domain specifically recognizes and binds 'Lys-6'-linked polyubiquitin chains.</text>
</comment>
<gene>
    <name type="primary">Ubxn1</name>
    <name type="synonym">D19Ertd721e</name>
    <name type="synonym">Saks1</name>
</gene>
<name>UBXN1_MOUSE</name>
<feature type="initiator methionine" description="Removed" evidence="2">
    <location>
        <position position="1"/>
    </location>
</feature>
<feature type="chain" id="PRO_0000211024" description="UBX domain-containing protein 1">
    <location>
        <begin position="2"/>
        <end position="297"/>
    </location>
</feature>
<feature type="domain" description="UBA" evidence="3">
    <location>
        <begin position="2"/>
        <end position="42"/>
    </location>
</feature>
<feature type="domain" description="UBX" evidence="4">
    <location>
        <begin position="209"/>
        <end position="291"/>
    </location>
</feature>
<feature type="region of interest" description="Disordered" evidence="5">
    <location>
        <begin position="38"/>
        <end position="214"/>
    </location>
</feature>
<feature type="region of interest" description="Interaction with BRCA1" evidence="1">
    <location>
        <begin position="43"/>
        <end position="297"/>
    </location>
</feature>
<feature type="compositionally biased region" description="Acidic residues" evidence="5">
    <location>
        <begin position="42"/>
        <end position="52"/>
    </location>
</feature>
<feature type="compositionally biased region" description="Basic and acidic residues" evidence="5">
    <location>
        <begin position="86"/>
        <end position="122"/>
    </location>
</feature>
<feature type="compositionally biased region" description="Basic and acidic residues" evidence="5">
    <location>
        <begin position="137"/>
        <end position="177"/>
    </location>
</feature>
<feature type="modified residue" description="N-acetylalanine" evidence="2">
    <location>
        <position position="2"/>
    </location>
</feature>
<feature type="modified residue" description="Phosphoserine" evidence="9">
    <location>
        <position position="199"/>
    </location>
</feature>
<feature type="modified residue" description="Phosphoserine; by MAPK12" evidence="2">
    <location>
        <position position="200"/>
    </location>
</feature>
<feature type="modified residue" description="Phosphothreonine" evidence="2">
    <location>
        <position position="207"/>
    </location>
</feature>
<feature type="modified residue" description="Phosphothreonine" evidence="2">
    <location>
        <position position="229"/>
    </location>
</feature>
<feature type="modified residue" description="Phosphoserine" evidence="2">
    <location>
        <position position="270"/>
    </location>
</feature>
<feature type="helix" evidence="10">
    <location>
        <begin position="6"/>
        <end position="11"/>
    </location>
</feature>
<feature type="turn" evidence="10">
    <location>
        <begin position="12"/>
        <end position="14"/>
    </location>
</feature>
<feature type="helix" evidence="10">
    <location>
        <begin position="17"/>
        <end position="27"/>
    </location>
</feature>
<feature type="helix" evidence="10">
    <location>
        <begin position="32"/>
        <end position="42"/>
    </location>
</feature>
<protein>
    <recommendedName>
        <fullName>UBX domain-containing protein 1</fullName>
    </recommendedName>
    <alternativeName>
        <fullName>Protein 2B28</fullName>
    </alternativeName>
    <alternativeName>
        <fullName>SAPK substrate protein 1</fullName>
    </alternativeName>
    <alternativeName>
        <fullName>UBA/UBX 33.3 kDa protein</fullName>
        <shortName>mY33K</shortName>
    </alternativeName>
</protein>
<evidence type="ECO:0000250" key="1"/>
<evidence type="ECO:0000250" key="2">
    <source>
        <dbReference type="UniProtKB" id="Q04323"/>
    </source>
</evidence>
<evidence type="ECO:0000255" key="3">
    <source>
        <dbReference type="PROSITE-ProRule" id="PRU00212"/>
    </source>
</evidence>
<evidence type="ECO:0000255" key="4">
    <source>
        <dbReference type="PROSITE-ProRule" id="PRU00215"/>
    </source>
</evidence>
<evidence type="ECO:0000256" key="5">
    <source>
        <dbReference type="SAM" id="MobiDB-lite"/>
    </source>
</evidence>
<evidence type="ECO:0000269" key="6">
    <source>
    </source>
</evidence>
<evidence type="ECO:0000269" key="7">
    <source>
    </source>
</evidence>
<evidence type="ECO:0000269" key="8">
    <source>
    </source>
</evidence>
<evidence type="ECO:0007744" key="9">
    <source>
    </source>
</evidence>
<evidence type="ECO:0007829" key="10">
    <source>
        <dbReference type="PDB" id="1WHC"/>
    </source>
</evidence>